<gene>
    <name type="ordered locus">BURPS668_A2591</name>
</gene>
<accession>A3NML3</accession>
<feature type="chain" id="PRO_0000387637" description="Acetaldehyde dehydrogenase">
    <location>
        <begin position="1"/>
        <end position="297"/>
    </location>
</feature>
<feature type="active site" description="Acyl-thioester intermediate" evidence="1">
    <location>
        <position position="130"/>
    </location>
</feature>
<feature type="binding site" evidence="1">
    <location>
        <begin position="15"/>
        <end position="18"/>
    </location>
    <ligand>
        <name>NAD(+)</name>
        <dbReference type="ChEBI" id="CHEBI:57540"/>
    </ligand>
</feature>
<feature type="binding site" evidence="1">
    <location>
        <begin position="162"/>
        <end position="170"/>
    </location>
    <ligand>
        <name>NAD(+)</name>
        <dbReference type="ChEBI" id="CHEBI:57540"/>
    </ligand>
</feature>
<feature type="binding site" evidence="1">
    <location>
        <position position="272"/>
    </location>
    <ligand>
        <name>NAD(+)</name>
        <dbReference type="ChEBI" id="CHEBI:57540"/>
    </ligand>
</feature>
<name>ACDH_BURP6</name>
<keyword id="KW-0058">Aromatic hydrocarbons catabolism</keyword>
<keyword id="KW-0520">NAD</keyword>
<keyword id="KW-0560">Oxidoreductase</keyword>
<reference key="1">
    <citation type="journal article" date="2010" name="Genome Biol. Evol.">
        <title>Continuing evolution of Burkholderia mallei through genome reduction and large-scale rearrangements.</title>
        <authorList>
            <person name="Losada L."/>
            <person name="Ronning C.M."/>
            <person name="DeShazer D."/>
            <person name="Woods D."/>
            <person name="Fedorova N."/>
            <person name="Kim H.S."/>
            <person name="Shabalina S.A."/>
            <person name="Pearson T.R."/>
            <person name="Brinkac L."/>
            <person name="Tan P."/>
            <person name="Nandi T."/>
            <person name="Crabtree J."/>
            <person name="Badger J."/>
            <person name="Beckstrom-Sternberg S."/>
            <person name="Saqib M."/>
            <person name="Schutzer S.E."/>
            <person name="Keim P."/>
            <person name="Nierman W.C."/>
        </authorList>
    </citation>
    <scope>NUCLEOTIDE SEQUENCE [LARGE SCALE GENOMIC DNA]</scope>
    <source>
        <strain>668</strain>
    </source>
</reference>
<protein>
    <recommendedName>
        <fullName evidence="1">Acetaldehyde dehydrogenase</fullName>
        <ecNumber evidence="1">1.2.1.10</ecNumber>
    </recommendedName>
    <alternativeName>
        <fullName evidence="1">Acetaldehyde dehydrogenase [acetylating]</fullName>
    </alternativeName>
</protein>
<dbReference type="EC" id="1.2.1.10" evidence="1"/>
<dbReference type="EMBL" id="CP000571">
    <property type="protein sequence ID" value="ABN85460.1"/>
    <property type="molecule type" value="Genomic_DNA"/>
</dbReference>
<dbReference type="RefSeq" id="WP_004529065.1">
    <property type="nucleotide sequence ID" value="NC_009075.1"/>
</dbReference>
<dbReference type="SMR" id="A3NML3"/>
<dbReference type="KEGG" id="bpd:BURPS668_A2591"/>
<dbReference type="HOGENOM" id="CLU_062208_0_0_4"/>
<dbReference type="GO" id="GO:0008774">
    <property type="term" value="F:acetaldehyde dehydrogenase (acetylating) activity"/>
    <property type="evidence" value="ECO:0007669"/>
    <property type="project" value="UniProtKB-UniRule"/>
</dbReference>
<dbReference type="GO" id="GO:0051287">
    <property type="term" value="F:NAD binding"/>
    <property type="evidence" value="ECO:0007669"/>
    <property type="project" value="UniProtKB-UniRule"/>
</dbReference>
<dbReference type="GO" id="GO:0009056">
    <property type="term" value="P:catabolic process"/>
    <property type="evidence" value="ECO:0007669"/>
    <property type="project" value="UniProtKB-KW"/>
</dbReference>
<dbReference type="CDD" id="cd23933">
    <property type="entry name" value="ALDH_C"/>
    <property type="match status" value="1"/>
</dbReference>
<dbReference type="Gene3D" id="3.30.360.10">
    <property type="entry name" value="Dihydrodipicolinate Reductase, domain 2"/>
    <property type="match status" value="1"/>
</dbReference>
<dbReference type="Gene3D" id="3.40.50.720">
    <property type="entry name" value="NAD(P)-binding Rossmann-like Domain"/>
    <property type="match status" value="1"/>
</dbReference>
<dbReference type="HAMAP" id="MF_01657">
    <property type="entry name" value="Ac_ald_DH_ac"/>
    <property type="match status" value="1"/>
</dbReference>
<dbReference type="InterPro" id="IPR003361">
    <property type="entry name" value="Acetaldehyde_dehydrogenase"/>
</dbReference>
<dbReference type="InterPro" id="IPR015426">
    <property type="entry name" value="Acetylaldehyde_DH_C"/>
</dbReference>
<dbReference type="InterPro" id="IPR036291">
    <property type="entry name" value="NAD(P)-bd_dom_sf"/>
</dbReference>
<dbReference type="InterPro" id="IPR000534">
    <property type="entry name" value="Semialdehyde_DH_NAD-bd"/>
</dbReference>
<dbReference type="NCBIfam" id="TIGR03215">
    <property type="entry name" value="ac_ald_DH_ac"/>
    <property type="match status" value="1"/>
</dbReference>
<dbReference type="NCBIfam" id="NF006157">
    <property type="entry name" value="PRK08300.1"/>
    <property type="match status" value="1"/>
</dbReference>
<dbReference type="Pfam" id="PF09290">
    <property type="entry name" value="AcetDehyd-dimer"/>
    <property type="match status" value="1"/>
</dbReference>
<dbReference type="Pfam" id="PF01118">
    <property type="entry name" value="Semialdhyde_dh"/>
    <property type="match status" value="1"/>
</dbReference>
<dbReference type="PIRSF" id="PIRSF015689">
    <property type="entry name" value="Actaldh_dh_actl"/>
    <property type="match status" value="1"/>
</dbReference>
<dbReference type="SMART" id="SM00859">
    <property type="entry name" value="Semialdhyde_dh"/>
    <property type="match status" value="1"/>
</dbReference>
<dbReference type="SUPFAM" id="SSF55347">
    <property type="entry name" value="Glyceraldehyde-3-phosphate dehydrogenase-like, C-terminal domain"/>
    <property type="match status" value="1"/>
</dbReference>
<dbReference type="SUPFAM" id="SSF51735">
    <property type="entry name" value="NAD(P)-binding Rossmann-fold domains"/>
    <property type="match status" value="1"/>
</dbReference>
<organism>
    <name type="scientific">Burkholderia pseudomallei (strain 668)</name>
    <dbReference type="NCBI Taxonomy" id="320373"/>
    <lineage>
        <taxon>Bacteria</taxon>
        <taxon>Pseudomonadati</taxon>
        <taxon>Pseudomonadota</taxon>
        <taxon>Betaproteobacteria</taxon>
        <taxon>Burkholderiales</taxon>
        <taxon>Burkholderiaceae</taxon>
        <taxon>Burkholderia</taxon>
        <taxon>pseudomallei group</taxon>
    </lineage>
</organism>
<proteinExistence type="inferred from homology"/>
<sequence>MKSKSSRTRVAILGSGSIGLDLMFKVKASEQFDLKFVVGRNANSDGLRLARSCNVETSSDGLDFLKAHEDAYDLVFDATSAAAHKVNNRFFSDAGKFVIDLTPAKVGRLCVPCINLDDMGAEQNVNLITCGGQASLPLAYALKQAVDEIDYLEVVSAIASRSAGIATRENIDEYMTTTEYALAKFSGAKKTKAILNINPAEPGVRMQTTLYAYARYRDFDRVRASVADMVEKVREYVPGYRLVVEPLESQGRITIGLTVRGRGDYLPEYAGNLDIINCAALAVASHRHATARLGATQ</sequence>
<comment type="catalytic activity">
    <reaction evidence="1">
        <text>acetaldehyde + NAD(+) + CoA = acetyl-CoA + NADH + H(+)</text>
        <dbReference type="Rhea" id="RHEA:23288"/>
        <dbReference type="ChEBI" id="CHEBI:15343"/>
        <dbReference type="ChEBI" id="CHEBI:15378"/>
        <dbReference type="ChEBI" id="CHEBI:57287"/>
        <dbReference type="ChEBI" id="CHEBI:57288"/>
        <dbReference type="ChEBI" id="CHEBI:57540"/>
        <dbReference type="ChEBI" id="CHEBI:57945"/>
        <dbReference type="EC" id="1.2.1.10"/>
    </reaction>
</comment>
<comment type="similarity">
    <text evidence="1">Belongs to the acetaldehyde dehydrogenase family.</text>
</comment>
<evidence type="ECO:0000255" key="1">
    <source>
        <dbReference type="HAMAP-Rule" id="MF_01657"/>
    </source>
</evidence>